<gene>
    <name evidence="1" type="primary">pyrB</name>
    <name type="ordered locus">aq_409</name>
</gene>
<dbReference type="EC" id="2.1.3.2" evidence="1"/>
<dbReference type="EMBL" id="AE000657">
    <property type="protein sequence ID" value="AAC06675.1"/>
    <property type="molecule type" value="Genomic_DNA"/>
</dbReference>
<dbReference type="PIR" id="B70337">
    <property type="entry name" value="B70337"/>
</dbReference>
<dbReference type="RefSeq" id="NP_213286.1">
    <property type="nucleotide sequence ID" value="NC_000918.1"/>
</dbReference>
<dbReference type="RefSeq" id="WP_010880224.1">
    <property type="nucleotide sequence ID" value="NC_000918.1"/>
</dbReference>
<dbReference type="PDB" id="3D6N">
    <property type="method" value="X-ray"/>
    <property type="resolution" value="2.30 A"/>
    <property type="chains" value="B=1-291"/>
</dbReference>
<dbReference type="PDB" id="4BJH">
    <property type="method" value="X-ray"/>
    <property type="resolution" value="2.20 A"/>
    <property type="chains" value="B=1-291"/>
</dbReference>
<dbReference type="PDBsum" id="3D6N"/>
<dbReference type="PDBsum" id="4BJH"/>
<dbReference type="SMR" id="O66726"/>
<dbReference type="FunCoup" id="O66726">
    <property type="interactions" value="483"/>
</dbReference>
<dbReference type="STRING" id="224324.aq_409"/>
<dbReference type="EnsemblBacteria" id="AAC06675">
    <property type="protein sequence ID" value="AAC06675"/>
    <property type="gene ID" value="aq_409"/>
</dbReference>
<dbReference type="KEGG" id="aae:aq_409"/>
<dbReference type="PATRIC" id="fig|224324.8.peg.336"/>
<dbReference type="eggNOG" id="COG0540">
    <property type="taxonomic scope" value="Bacteria"/>
</dbReference>
<dbReference type="HOGENOM" id="CLU_043846_2_0_0"/>
<dbReference type="InParanoid" id="O66726"/>
<dbReference type="OrthoDB" id="9802587at2"/>
<dbReference type="BRENDA" id="2.1.3.2">
    <property type="organism ID" value="396"/>
</dbReference>
<dbReference type="UniPathway" id="UPA00070">
    <property type="reaction ID" value="UER00116"/>
</dbReference>
<dbReference type="EvolutionaryTrace" id="O66726"/>
<dbReference type="Proteomes" id="UP000000798">
    <property type="component" value="Chromosome"/>
</dbReference>
<dbReference type="GO" id="GO:0016597">
    <property type="term" value="F:amino acid binding"/>
    <property type="evidence" value="ECO:0007669"/>
    <property type="project" value="InterPro"/>
</dbReference>
<dbReference type="GO" id="GO:0004070">
    <property type="term" value="F:aspartate carbamoyltransferase activity"/>
    <property type="evidence" value="ECO:0007669"/>
    <property type="project" value="UniProtKB-UniRule"/>
</dbReference>
<dbReference type="GO" id="GO:0006207">
    <property type="term" value="P:'de novo' pyrimidine nucleobase biosynthetic process"/>
    <property type="evidence" value="ECO:0007669"/>
    <property type="project" value="InterPro"/>
</dbReference>
<dbReference type="GO" id="GO:0044205">
    <property type="term" value="P:'de novo' UMP biosynthetic process"/>
    <property type="evidence" value="ECO:0007669"/>
    <property type="project" value="UniProtKB-UniRule"/>
</dbReference>
<dbReference type="GO" id="GO:0006520">
    <property type="term" value="P:amino acid metabolic process"/>
    <property type="evidence" value="ECO:0007669"/>
    <property type="project" value="InterPro"/>
</dbReference>
<dbReference type="Gene3D" id="3.40.50.1370">
    <property type="entry name" value="Aspartate/ornithine carbamoyltransferase"/>
    <property type="match status" value="2"/>
</dbReference>
<dbReference type="HAMAP" id="MF_00001">
    <property type="entry name" value="Asp_carb_tr"/>
    <property type="match status" value="1"/>
</dbReference>
<dbReference type="InterPro" id="IPR006132">
    <property type="entry name" value="Asp/Orn_carbamoyltranf_P-bd"/>
</dbReference>
<dbReference type="InterPro" id="IPR006130">
    <property type="entry name" value="Asp/Orn_carbamoylTrfase"/>
</dbReference>
<dbReference type="InterPro" id="IPR036901">
    <property type="entry name" value="Asp/Orn_carbamoylTrfase_sf"/>
</dbReference>
<dbReference type="InterPro" id="IPR002082">
    <property type="entry name" value="Asp_carbamoyltransf"/>
</dbReference>
<dbReference type="InterPro" id="IPR006131">
    <property type="entry name" value="Asp_carbamoyltransf_Asp/Orn-bd"/>
</dbReference>
<dbReference type="NCBIfam" id="TIGR00670">
    <property type="entry name" value="asp_carb_tr"/>
    <property type="match status" value="1"/>
</dbReference>
<dbReference type="NCBIfam" id="NF002032">
    <property type="entry name" value="PRK00856.1"/>
    <property type="match status" value="1"/>
</dbReference>
<dbReference type="PANTHER" id="PTHR45753:SF6">
    <property type="entry name" value="ASPARTATE CARBAMOYLTRANSFERASE"/>
    <property type="match status" value="1"/>
</dbReference>
<dbReference type="PANTHER" id="PTHR45753">
    <property type="entry name" value="ORNITHINE CARBAMOYLTRANSFERASE, MITOCHONDRIAL"/>
    <property type="match status" value="1"/>
</dbReference>
<dbReference type="Pfam" id="PF00185">
    <property type="entry name" value="OTCace"/>
    <property type="match status" value="1"/>
</dbReference>
<dbReference type="Pfam" id="PF02729">
    <property type="entry name" value="OTCace_N"/>
    <property type="match status" value="1"/>
</dbReference>
<dbReference type="PRINTS" id="PR00100">
    <property type="entry name" value="AOTCASE"/>
</dbReference>
<dbReference type="PRINTS" id="PR00101">
    <property type="entry name" value="ATCASE"/>
</dbReference>
<dbReference type="SUPFAM" id="SSF53671">
    <property type="entry name" value="Aspartate/ornithine carbamoyltransferase"/>
    <property type="match status" value="1"/>
</dbReference>
<dbReference type="PROSITE" id="PS00097">
    <property type="entry name" value="CARBAMOYLTRANSFERASE"/>
    <property type="match status" value="1"/>
</dbReference>
<reference key="1">
    <citation type="journal article" date="1998" name="Nature">
        <title>The complete genome of the hyperthermophilic bacterium Aquifex aeolicus.</title>
        <authorList>
            <person name="Deckert G."/>
            <person name="Warren P.V."/>
            <person name="Gaasterland T."/>
            <person name="Young W.G."/>
            <person name="Lenox A.L."/>
            <person name="Graham D.E."/>
            <person name="Overbeek R."/>
            <person name="Snead M.A."/>
            <person name="Keller M."/>
            <person name="Aujay M."/>
            <person name="Huber R."/>
            <person name="Feldman R.A."/>
            <person name="Short J.M."/>
            <person name="Olsen G.J."/>
            <person name="Swanson R.V."/>
        </authorList>
    </citation>
    <scope>NUCLEOTIDE SEQUENCE [LARGE SCALE GENOMIC DNA]</scope>
    <source>
        <strain>VF5</strain>
    </source>
</reference>
<name>PYRB_AQUAE</name>
<proteinExistence type="evidence at protein level"/>
<organism>
    <name type="scientific">Aquifex aeolicus (strain VF5)</name>
    <dbReference type="NCBI Taxonomy" id="224324"/>
    <lineage>
        <taxon>Bacteria</taxon>
        <taxon>Pseudomonadati</taxon>
        <taxon>Aquificota</taxon>
        <taxon>Aquificia</taxon>
        <taxon>Aquificales</taxon>
        <taxon>Aquificaceae</taxon>
        <taxon>Aquifex</taxon>
    </lineage>
</organism>
<comment type="function">
    <text evidence="1">Catalyzes the condensation of carbamoyl phosphate and aspartate to form carbamoyl aspartate and inorganic phosphate, the committed step in the de novo pyrimidine nucleotide biosynthesis pathway.</text>
</comment>
<comment type="catalytic activity">
    <reaction evidence="1">
        <text>carbamoyl phosphate + L-aspartate = N-carbamoyl-L-aspartate + phosphate + H(+)</text>
        <dbReference type="Rhea" id="RHEA:20013"/>
        <dbReference type="ChEBI" id="CHEBI:15378"/>
        <dbReference type="ChEBI" id="CHEBI:29991"/>
        <dbReference type="ChEBI" id="CHEBI:32814"/>
        <dbReference type="ChEBI" id="CHEBI:43474"/>
        <dbReference type="ChEBI" id="CHEBI:58228"/>
        <dbReference type="EC" id="2.1.3.2"/>
    </reaction>
</comment>
<comment type="pathway">
    <text evidence="1">Pyrimidine metabolism; UMP biosynthesis via de novo pathway; (S)-dihydroorotate from bicarbonate: step 2/3.</text>
</comment>
<comment type="subunit">
    <text evidence="1">Heterododecamer (2C3:3R2) of six catalytic PyrB chains organized as two trimers (C3), and six regulatory PyrI chains organized as three dimers (R2).</text>
</comment>
<comment type="similarity">
    <text evidence="1 2">Belongs to the aspartate/ornithine carbamoyltransferase superfamily. ATCase family.</text>
</comment>
<feature type="chain" id="PRO_0000113087" description="Aspartate carbamoyltransferase catalytic subunit">
    <location>
        <begin position="1"/>
        <end position="291"/>
    </location>
</feature>
<feature type="binding site" evidence="1">
    <location>
        <position position="47"/>
    </location>
    <ligand>
        <name>carbamoyl phosphate</name>
        <dbReference type="ChEBI" id="CHEBI:58228"/>
    </ligand>
</feature>
<feature type="binding site" evidence="1">
    <location>
        <position position="48"/>
    </location>
    <ligand>
        <name>carbamoyl phosphate</name>
        <dbReference type="ChEBI" id="CHEBI:58228"/>
    </ligand>
</feature>
<feature type="binding site" evidence="1">
    <location>
        <position position="75"/>
    </location>
    <ligand>
        <name>L-aspartate</name>
        <dbReference type="ChEBI" id="CHEBI:29991"/>
    </ligand>
</feature>
<feature type="binding site" evidence="1">
    <location>
        <position position="97"/>
    </location>
    <ligand>
        <name>carbamoyl phosphate</name>
        <dbReference type="ChEBI" id="CHEBI:58228"/>
    </ligand>
</feature>
<feature type="binding site" evidence="1">
    <location>
        <position position="126"/>
    </location>
    <ligand>
        <name>carbamoyl phosphate</name>
        <dbReference type="ChEBI" id="CHEBI:58228"/>
    </ligand>
</feature>
<feature type="binding site" evidence="1">
    <location>
        <position position="129"/>
    </location>
    <ligand>
        <name>carbamoyl phosphate</name>
        <dbReference type="ChEBI" id="CHEBI:58228"/>
    </ligand>
</feature>
<feature type="binding site" evidence="1">
    <location>
        <position position="159"/>
    </location>
    <ligand>
        <name>L-aspartate</name>
        <dbReference type="ChEBI" id="CHEBI:29991"/>
    </ligand>
</feature>
<feature type="binding site" evidence="1">
    <location>
        <position position="213"/>
    </location>
    <ligand>
        <name>L-aspartate</name>
        <dbReference type="ChEBI" id="CHEBI:29991"/>
    </ligand>
</feature>
<feature type="binding site" evidence="1">
    <location>
        <position position="251"/>
    </location>
    <ligand>
        <name>carbamoyl phosphate</name>
        <dbReference type="ChEBI" id="CHEBI:58228"/>
    </ligand>
</feature>
<feature type="binding site" evidence="1">
    <location>
        <position position="252"/>
    </location>
    <ligand>
        <name>carbamoyl phosphate</name>
        <dbReference type="ChEBI" id="CHEBI:58228"/>
    </ligand>
</feature>
<feature type="helix" evidence="4">
    <location>
        <begin position="7"/>
        <end position="9"/>
    </location>
</feature>
<feature type="helix" evidence="4">
    <location>
        <begin position="12"/>
        <end position="26"/>
    </location>
</feature>
<feature type="strand" evidence="4">
    <location>
        <begin position="36"/>
        <end position="43"/>
    </location>
</feature>
<feature type="helix" evidence="4">
    <location>
        <begin position="47"/>
        <end position="58"/>
    </location>
</feature>
<feature type="strand" evidence="4">
    <location>
        <begin position="62"/>
        <end position="67"/>
    </location>
</feature>
<feature type="helix" evidence="4">
    <location>
        <begin position="68"/>
        <end position="70"/>
    </location>
</feature>
<feature type="helix" evidence="4">
    <location>
        <begin position="72"/>
        <end position="75"/>
    </location>
</feature>
<feature type="helix" evidence="4">
    <location>
        <begin position="79"/>
        <end position="88"/>
    </location>
</feature>
<feature type="strand" evidence="4">
    <location>
        <begin position="92"/>
        <end position="100"/>
    </location>
</feature>
<feature type="helix" evidence="4">
    <location>
        <begin position="106"/>
        <end position="110"/>
    </location>
</feature>
<feature type="strand" evidence="4">
    <location>
        <begin position="112"/>
        <end position="121"/>
    </location>
</feature>
<feature type="turn" evidence="4">
    <location>
        <begin position="122"/>
        <end position="124"/>
    </location>
</feature>
<feature type="helix" evidence="4">
    <location>
        <begin position="127"/>
        <end position="141"/>
    </location>
</feature>
<feature type="strand" evidence="4">
    <location>
        <begin position="148"/>
        <end position="153"/>
    </location>
</feature>
<feature type="helix" evidence="4">
    <location>
        <begin position="159"/>
        <end position="170"/>
    </location>
</feature>
<feature type="strand" evidence="4">
    <location>
        <begin position="174"/>
        <end position="179"/>
    </location>
</feature>
<feature type="helix" evidence="4">
    <location>
        <begin position="181"/>
        <end position="183"/>
    </location>
</feature>
<feature type="helix" evidence="4">
    <location>
        <begin position="188"/>
        <end position="191"/>
    </location>
</feature>
<feature type="strand" evidence="4">
    <location>
        <begin position="193"/>
        <end position="198"/>
    </location>
</feature>
<feature type="helix" evidence="4">
    <location>
        <begin position="199"/>
        <end position="205"/>
    </location>
</feature>
<feature type="strand" evidence="4">
    <location>
        <begin position="207"/>
        <end position="211"/>
    </location>
</feature>
<feature type="helix" evidence="4">
    <location>
        <begin position="216"/>
        <end position="218"/>
    </location>
</feature>
<feature type="strand" evidence="3">
    <location>
        <begin position="223"/>
        <end position="225"/>
    </location>
</feature>
<feature type="helix" evidence="4">
    <location>
        <begin position="227"/>
        <end position="234"/>
    </location>
</feature>
<feature type="helix" evidence="4">
    <location>
        <begin position="238"/>
        <end position="241"/>
    </location>
</feature>
<feature type="turn" evidence="4">
    <location>
        <begin position="255"/>
        <end position="257"/>
    </location>
</feature>
<feature type="helix" evidence="3">
    <location>
        <begin position="261"/>
        <end position="263"/>
    </location>
</feature>
<feature type="strand" evidence="3">
    <location>
        <begin position="264"/>
        <end position="266"/>
    </location>
</feature>
<feature type="helix" evidence="4">
    <location>
        <begin position="271"/>
        <end position="289"/>
    </location>
</feature>
<protein>
    <recommendedName>
        <fullName evidence="1">Aspartate carbamoyltransferase catalytic subunit</fullName>
        <ecNumber evidence="1">2.1.3.2</ecNumber>
    </recommendedName>
    <alternativeName>
        <fullName evidence="1">Aspartate transcarbamylase</fullName>
        <shortName evidence="1">ATCase</shortName>
    </alternativeName>
</protein>
<evidence type="ECO:0000255" key="1">
    <source>
        <dbReference type="HAMAP-Rule" id="MF_00001"/>
    </source>
</evidence>
<evidence type="ECO:0000305" key="2"/>
<evidence type="ECO:0007829" key="3">
    <source>
        <dbReference type="PDB" id="3D6N"/>
    </source>
</evidence>
<evidence type="ECO:0007829" key="4">
    <source>
        <dbReference type="PDB" id="4BJH"/>
    </source>
</evidence>
<keyword id="KW-0002">3D-structure</keyword>
<keyword id="KW-0665">Pyrimidine biosynthesis</keyword>
<keyword id="KW-1185">Reference proteome</keyword>
<keyword id="KW-0808">Transferase</keyword>
<sequence>MRSLISSLDLTREEVEEILKYAKEFKEGKEETIKASAVLFFSEPSTRTRLSFEKAARELGIETYLVSGSESSTVKGESFFDTLKTFEGLGFDYVVFRVPFVFFPYKEIVKSLNLRLVNAGDGTHQHPSQGLIDFFTIKEHFGEVKDLRVLYVGDIKHSRVFRSGAPLLNMFGAKIGVCGPKTLIPRDVEVFKVDVFDDVDKGIDWADVVIWLRLQKERQKENYIPSESSYFKQFGLTKERFEKVKLYMHPGPVNRNVDIDHELVYTEKSLIQEQVKNGIPVRKAIYKFLWT</sequence>
<accession>O66726</accession>